<keyword id="KW-0004">4Fe-4S</keyword>
<keyword id="KW-0028">Amino-acid biosynthesis</keyword>
<keyword id="KW-0100">Branched-chain amino acid biosynthesis</keyword>
<keyword id="KW-0408">Iron</keyword>
<keyword id="KW-0411">Iron-sulfur</keyword>
<keyword id="KW-0432">Leucine biosynthesis</keyword>
<keyword id="KW-0456">Lyase</keyword>
<keyword id="KW-0479">Metal-binding</keyword>
<sequence>MAKTLYEKLFDAHVVYEAQNETPLLYIDRHLVHEVTSPQAFDGLRAHGRQVRQPGKTFATMDHNVSTQTKDINASGEMARIQMQELIKNCKEFGVELYDLNHPYQGIVHVMGPEQGVTLPGMTIVCGDSHTATHGAFGALAFGIGTSEVEHVLATQTLKQGRAKTMKIEVQGKAAPGITAKDIVLAIIGKTGSAGGTGHVVEFCGEAIRDLSMEGRMTLCNMAIEMGAKAGLVAPDETTFNYVRGRLHAPKGKDFDDAVAYWKTLKTDDGATFDTVVTLQAAEIAPQVTWGTNPGQVISVTDNIPDPASFSDPVERASAEKALAYMGLKSGIPLTEVAIDKVFIGSCTNSRIEDLRAAAEIAKGRKVAPGVQALVVPGSGPVKAQAEAEGLDKIFIEAGFEWRLPGCSMCLAMNNDRLNPGERCASTSNRNFEGRQGRGGRTHLVSPAMAAAAAVTGHFADIRNLK</sequence>
<feature type="chain" id="PRO_1000063564" description="3-isopropylmalate dehydratase large subunit">
    <location>
        <begin position="1"/>
        <end position="466"/>
    </location>
</feature>
<feature type="binding site" evidence="1">
    <location>
        <position position="347"/>
    </location>
    <ligand>
        <name>[4Fe-4S] cluster</name>
        <dbReference type="ChEBI" id="CHEBI:49883"/>
    </ligand>
</feature>
<feature type="binding site" evidence="1">
    <location>
        <position position="407"/>
    </location>
    <ligand>
        <name>[4Fe-4S] cluster</name>
        <dbReference type="ChEBI" id="CHEBI:49883"/>
    </ligand>
</feature>
<feature type="binding site" evidence="1">
    <location>
        <position position="410"/>
    </location>
    <ligand>
        <name>[4Fe-4S] cluster</name>
        <dbReference type="ChEBI" id="CHEBI:49883"/>
    </ligand>
</feature>
<accession>A6T4L7</accession>
<reference key="1">
    <citation type="submission" date="2006-09" db="EMBL/GenBank/DDBJ databases">
        <authorList>
            <consortium name="The Klebsiella pneumonia Genome Sequencing Project"/>
            <person name="McClelland M."/>
            <person name="Sanderson E.K."/>
            <person name="Spieth J."/>
            <person name="Clifton W.S."/>
            <person name="Latreille P."/>
            <person name="Sabo A."/>
            <person name="Pepin K."/>
            <person name="Bhonagiri V."/>
            <person name="Porwollik S."/>
            <person name="Ali J."/>
            <person name="Wilson R.K."/>
        </authorList>
    </citation>
    <scope>NUCLEOTIDE SEQUENCE [LARGE SCALE GENOMIC DNA]</scope>
    <source>
        <strain>ATCC 700721 / MGH 78578</strain>
    </source>
</reference>
<gene>
    <name evidence="1" type="primary">leuC</name>
    <name type="ordered locus">KPN78578_00770</name>
    <name type="ORF">KPN_00078</name>
</gene>
<dbReference type="EC" id="4.2.1.33" evidence="1"/>
<dbReference type="EMBL" id="CP000647">
    <property type="protein sequence ID" value="ABR75538.1"/>
    <property type="molecule type" value="Genomic_DNA"/>
</dbReference>
<dbReference type="RefSeq" id="WP_004177417.1">
    <property type="nucleotide sequence ID" value="NC_009648.1"/>
</dbReference>
<dbReference type="SMR" id="A6T4L7"/>
<dbReference type="STRING" id="272620.KPN_00078"/>
<dbReference type="PaxDb" id="272620-KPN_00078"/>
<dbReference type="DNASU" id="5340900"/>
<dbReference type="EnsemblBacteria" id="ABR75538">
    <property type="protein sequence ID" value="ABR75538"/>
    <property type="gene ID" value="KPN_00078"/>
</dbReference>
<dbReference type="KEGG" id="kpn:KPN_00078"/>
<dbReference type="HOGENOM" id="CLU_006714_3_4_6"/>
<dbReference type="UniPathway" id="UPA00048">
    <property type="reaction ID" value="UER00071"/>
</dbReference>
<dbReference type="Proteomes" id="UP000000265">
    <property type="component" value="Chromosome"/>
</dbReference>
<dbReference type="GO" id="GO:0003861">
    <property type="term" value="F:3-isopropylmalate dehydratase activity"/>
    <property type="evidence" value="ECO:0007669"/>
    <property type="project" value="UniProtKB-UniRule"/>
</dbReference>
<dbReference type="GO" id="GO:0051539">
    <property type="term" value="F:4 iron, 4 sulfur cluster binding"/>
    <property type="evidence" value="ECO:0007669"/>
    <property type="project" value="UniProtKB-KW"/>
</dbReference>
<dbReference type="GO" id="GO:0046872">
    <property type="term" value="F:metal ion binding"/>
    <property type="evidence" value="ECO:0007669"/>
    <property type="project" value="UniProtKB-KW"/>
</dbReference>
<dbReference type="GO" id="GO:0009098">
    <property type="term" value="P:L-leucine biosynthetic process"/>
    <property type="evidence" value="ECO:0007669"/>
    <property type="project" value="UniProtKB-UniRule"/>
</dbReference>
<dbReference type="CDD" id="cd01583">
    <property type="entry name" value="IPMI"/>
    <property type="match status" value="1"/>
</dbReference>
<dbReference type="FunFam" id="3.30.499.10:FF:000006">
    <property type="entry name" value="3-isopropylmalate dehydratase large subunit"/>
    <property type="match status" value="1"/>
</dbReference>
<dbReference type="FunFam" id="3.30.499.10:FF:000007">
    <property type="entry name" value="3-isopropylmalate dehydratase large subunit"/>
    <property type="match status" value="1"/>
</dbReference>
<dbReference type="Gene3D" id="3.30.499.10">
    <property type="entry name" value="Aconitase, domain 3"/>
    <property type="match status" value="2"/>
</dbReference>
<dbReference type="HAMAP" id="MF_01026">
    <property type="entry name" value="LeuC_type1"/>
    <property type="match status" value="1"/>
</dbReference>
<dbReference type="InterPro" id="IPR004430">
    <property type="entry name" value="3-IsopropMal_deHydase_lsu"/>
</dbReference>
<dbReference type="InterPro" id="IPR015931">
    <property type="entry name" value="Acnase/IPM_dHydase_lsu_aba_1/3"/>
</dbReference>
<dbReference type="InterPro" id="IPR001030">
    <property type="entry name" value="Acoase/IPM_deHydtase_lsu_aba"/>
</dbReference>
<dbReference type="InterPro" id="IPR018136">
    <property type="entry name" value="Aconitase_4Fe-4S_BS"/>
</dbReference>
<dbReference type="InterPro" id="IPR036008">
    <property type="entry name" value="Aconitase_4Fe-4S_dom"/>
</dbReference>
<dbReference type="InterPro" id="IPR050067">
    <property type="entry name" value="IPM_dehydratase_rel_enz"/>
</dbReference>
<dbReference type="InterPro" id="IPR033941">
    <property type="entry name" value="IPMI_cat"/>
</dbReference>
<dbReference type="NCBIfam" id="TIGR00170">
    <property type="entry name" value="leuC"/>
    <property type="match status" value="1"/>
</dbReference>
<dbReference type="NCBIfam" id="NF004016">
    <property type="entry name" value="PRK05478.1"/>
    <property type="match status" value="1"/>
</dbReference>
<dbReference type="NCBIfam" id="NF009116">
    <property type="entry name" value="PRK12466.1"/>
    <property type="match status" value="1"/>
</dbReference>
<dbReference type="PANTHER" id="PTHR43822:SF9">
    <property type="entry name" value="3-ISOPROPYLMALATE DEHYDRATASE"/>
    <property type="match status" value="1"/>
</dbReference>
<dbReference type="PANTHER" id="PTHR43822">
    <property type="entry name" value="HOMOACONITASE, MITOCHONDRIAL-RELATED"/>
    <property type="match status" value="1"/>
</dbReference>
<dbReference type="Pfam" id="PF00330">
    <property type="entry name" value="Aconitase"/>
    <property type="match status" value="1"/>
</dbReference>
<dbReference type="PRINTS" id="PR00415">
    <property type="entry name" value="ACONITASE"/>
</dbReference>
<dbReference type="SUPFAM" id="SSF53732">
    <property type="entry name" value="Aconitase iron-sulfur domain"/>
    <property type="match status" value="1"/>
</dbReference>
<dbReference type="PROSITE" id="PS00450">
    <property type="entry name" value="ACONITASE_1"/>
    <property type="match status" value="1"/>
</dbReference>
<dbReference type="PROSITE" id="PS01244">
    <property type="entry name" value="ACONITASE_2"/>
    <property type="match status" value="1"/>
</dbReference>
<name>LEUC_KLEP7</name>
<organism>
    <name type="scientific">Klebsiella pneumoniae subsp. pneumoniae (strain ATCC 700721 / MGH 78578)</name>
    <dbReference type="NCBI Taxonomy" id="272620"/>
    <lineage>
        <taxon>Bacteria</taxon>
        <taxon>Pseudomonadati</taxon>
        <taxon>Pseudomonadota</taxon>
        <taxon>Gammaproteobacteria</taxon>
        <taxon>Enterobacterales</taxon>
        <taxon>Enterobacteriaceae</taxon>
        <taxon>Klebsiella/Raoultella group</taxon>
        <taxon>Klebsiella</taxon>
        <taxon>Klebsiella pneumoniae complex</taxon>
    </lineage>
</organism>
<comment type="function">
    <text evidence="1">Catalyzes the isomerization between 2-isopropylmalate and 3-isopropylmalate, via the formation of 2-isopropylmaleate.</text>
</comment>
<comment type="catalytic activity">
    <reaction evidence="1">
        <text>(2R,3S)-3-isopropylmalate = (2S)-2-isopropylmalate</text>
        <dbReference type="Rhea" id="RHEA:32287"/>
        <dbReference type="ChEBI" id="CHEBI:1178"/>
        <dbReference type="ChEBI" id="CHEBI:35121"/>
        <dbReference type="EC" id="4.2.1.33"/>
    </reaction>
</comment>
<comment type="cofactor">
    <cofactor evidence="1">
        <name>[4Fe-4S] cluster</name>
        <dbReference type="ChEBI" id="CHEBI:49883"/>
    </cofactor>
    <text evidence="1">Binds 1 [4Fe-4S] cluster per subunit.</text>
</comment>
<comment type="pathway">
    <text evidence="1">Amino-acid biosynthesis; L-leucine biosynthesis; L-leucine from 3-methyl-2-oxobutanoate: step 2/4.</text>
</comment>
<comment type="subunit">
    <text evidence="1">Heterodimer of LeuC and LeuD.</text>
</comment>
<comment type="similarity">
    <text evidence="1">Belongs to the aconitase/IPM isomerase family. LeuC type 1 subfamily.</text>
</comment>
<evidence type="ECO:0000255" key="1">
    <source>
        <dbReference type="HAMAP-Rule" id="MF_01026"/>
    </source>
</evidence>
<protein>
    <recommendedName>
        <fullName evidence="1">3-isopropylmalate dehydratase large subunit</fullName>
        <ecNumber evidence="1">4.2.1.33</ecNumber>
    </recommendedName>
    <alternativeName>
        <fullName evidence="1">Alpha-IPM isomerase</fullName>
        <shortName evidence="1">IPMI</shortName>
    </alternativeName>
    <alternativeName>
        <fullName evidence="1">Isopropylmalate isomerase</fullName>
    </alternativeName>
</protein>
<proteinExistence type="inferred from homology"/>